<accession>B1MKD8</accession>
<protein>
    <recommendedName>
        <fullName evidence="1">Peptidyl-tRNA hydrolase</fullName>
        <shortName evidence="1">Pth</shortName>
        <ecNumber evidence="1">3.1.1.29</ecNumber>
    </recommendedName>
</protein>
<name>PTH_MYCA9</name>
<evidence type="ECO:0000255" key="1">
    <source>
        <dbReference type="HAMAP-Rule" id="MF_00083"/>
    </source>
</evidence>
<organism>
    <name type="scientific">Mycobacteroides abscessus (strain ATCC 19977 / DSM 44196 / CCUG 20993 / CIP 104536 / JCM 13569 / NCTC 13031 / TMC 1543 / L948)</name>
    <name type="common">Mycobacterium abscessus</name>
    <dbReference type="NCBI Taxonomy" id="561007"/>
    <lineage>
        <taxon>Bacteria</taxon>
        <taxon>Bacillati</taxon>
        <taxon>Actinomycetota</taxon>
        <taxon>Actinomycetes</taxon>
        <taxon>Mycobacteriales</taxon>
        <taxon>Mycobacteriaceae</taxon>
        <taxon>Mycobacteroides</taxon>
        <taxon>Mycobacteroides abscessus</taxon>
    </lineage>
</organism>
<dbReference type="EC" id="3.1.1.29" evidence="1"/>
<dbReference type="EMBL" id="CU458896">
    <property type="protein sequence ID" value="CAM61230.1"/>
    <property type="molecule type" value="Genomic_DNA"/>
</dbReference>
<dbReference type="RefSeq" id="WP_005059133.1">
    <property type="nucleotide sequence ID" value="NZ_MLCG01000004.1"/>
</dbReference>
<dbReference type="SMR" id="B1MKD8"/>
<dbReference type="GeneID" id="93378090"/>
<dbReference type="KEGG" id="mab:MAB_1142c"/>
<dbReference type="Proteomes" id="UP000007137">
    <property type="component" value="Chromosome"/>
</dbReference>
<dbReference type="GO" id="GO:0005737">
    <property type="term" value="C:cytoplasm"/>
    <property type="evidence" value="ECO:0007669"/>
    <property type="project" value="UniProtKB-SubCell"/>
</dbReference>
<dbReference type="GO" id="GO:0004045">
    <property type="term" value="F:peptidyl-tRNA hydrolase activity"/>
    <property type="evidence" value="ECO:0007669"/>
    <property type="project" value="UniProtKB-UniRule"/>
</dbReference>
<dbReference type="GO" id="GO:0000049">
    <property type="term" value="F:tRNA binding"/>
    <property type="evidence" value="ECO:0007669"/>
    <property type="project" value="UniProtKB-UniRule"/>
</dbReference>
<dbReference type="GO" id="GO:0006515">
    <property type="term" value="P:protein quality control for misfolded or incompletely synthesized proteins"/>
    <property type="evidence" value="ECO:0007669"/>
    <property type="project" value="UniProtKB-UniRule"/>
</dbReference>
<dbReference type="GO" id="GO:0072344">
    <property type="term" value="P:rescue of stalled ribosome"/>
    <property type="evidence" value="ECO:0007669"/>
    <property type="project" value="UniProtKB-UniRule"/>
</dbReference>
<dbReference type="CDD" id="cd00462">
    <property type="entry name" value="PTH"/>
    <property type="match status" value="1"/>
</dbReference>
<dbReference type="FunFam" id="3.40.50.1470:FF:000001">
    <property type="entry name" value="Peptidyl-tRNA hydrolase"/>
    <property type="match status" value="1"/>
</dbReference>
<dbReference type="Gene3D" id="3.40.50.1470">
    <property type="entry name" value="Peptidyl-tRNA hydrolase"/>
    <property type="match status" value="1"/>
</dbReference>
<dbReference type="HAMAP" id="MF_00083">
    <property type="entry name" value="Pept_tRNA_hydro_bact"/>
    <property type="match status" value="1"/>
</dbReference>
<dbReference type="InterPro" id="IPR001328">
    <property type="entry name" value="Pept_tRNA_hydro"/>
</dbReference>
<dbReference type="InterPro" id="IPR018171">
    <property type="entry name" value="Pept_tRNA_hydro_CS"/>
</dbReference>
<dbReference type="InterPro" id="IPR036416">
    <property type="entry name" value="Pept_tRNA_hydro_sf"/>
</dbReference>
<dbReference type="NCBIfam" id="TIGR00447">
    <property type="entry name" value="pth"/>
    <property type="match status" value="1"/>
</dbReference>
<dbReference type="PANTHER" id="PTHR17224">
    <property type="entry name" value="PEPTIDYL-TRNA HYDROLASE"/>
    <property type="match status" value="1"/>
</dbReference>
<dbReference type="PANTHER" id="PTHR17224:SF1">
    <property type="entry name" value="PEPTIDYL-TRNA HYDROLASE"/>
    <property type="match status" value="1"/>
</dbReference>
<dbReference type="Pfam" id="PF01195">
    <property type="entry name" value="Pept_tRNA_hydro"/>
    <property type="match status" value="1"/>
</dbReference>
<dbReference type="SUPFAM" id="SSF53178">
    <property type="entry name" value="Peptidyl-tRNA hydrolase-like"/>
    <property type="match status" value="1"/>
</dbReference>
<dbReference type="PROSITE" id="PS01195">
    <property type="entry name" value="PEPT_TRNA_HYDROL_1"/>
    <property type="match status" value="1"/>
</dbReference>
<dbReference type="PROSITE" id="PS01196">
    <property type="entry name" value="PEPT_TRNA_HYDROL_2"/>
    <property type="match status" value="1"/>
</dbReference>
<sequence length="196" mass="20688">MPVLSDDAVLVVGLGNPGPNYAKTRHNLGFMVADLLAAKDGATFKPHKKSGAEATTIRLGGRAVNLAKPRTFMNTSGPQVAALAKFFSVPPANVIVMHDELDLDFGTVRLKLGGGEGGHNGLRSVSQSLGTKDYLRVRLGVGRPPGRKDPAAFVLENFAKAETDQVPLLCEQGADAAELLIRLGLEAAQNQVHAWG</sequence>
<comment type="function">
    <text evidence="1">Hydrolyzes ribosome-free peptidyl-tRNAs (with 1 or more amino acids incorporated), which drop off the ribosome during protein synthesis, or as a result of ribosome stalling.</text>
</comment>
<comment type="function">
    <text evidence="1">Catalyzes the release of premature peptidyl moieties from peptidyl-tRNA molecules trapped in stalled 50S ribosomal subunits, and thus maintains levels of free tRNAs and 50S ribosomes.</text>
</comment>
<comment type="catalytic activity">
    <reaction evidence="1">
        <text>an N-acyl-L-alpha-aminoacyl-tRNA + H2O = an N-acyl-L-amino acid + a tRNA + H(+)</text>
        <dbReference type="Rhea" id="RHEA:54448"/>
        <dbReference type="Rhea" id="RHEA-COMP:10123"/>
        <dbReference type="Rhea" id="RHEA-COMP:13883"/>
        <dbReference type="ChEBI" id="CHEBI:15377"/>
        <dbReference type="ChEBI" id="CHEBI:15378"/>
        <dbReference type="ChEBI" id="CHEBI:59874"/>
        <dbReference type="ChEBI" id="CHEBI:78442"/>
        <dbReference type="ChEBI" id="CHEBI:138191"/>
        <dbReference type="EC" id="3.1.1.29"/>
    </reaction>
</comment>
<comment type="subunit">
    <text evidence="1">Monomer.</text>
</comment>
<comment type="subcellular location">
    <subcellularLocation>
        <location evidence="1">Cytoplasm</location>
    </subcellularLocation>
</comment>
<comment type="similarity">
    <text evidence="1">Belongs to the PTH family.</text>
</comment>
<gene>
    <name evidence="1" type="primary">pth</name>
    <name type="ordered locus">MAB_1142c</name>
</gene>
<reference key="1">
    <citation type="journal article" date="2009" name="PLoS ONE">
        <title>Non mycobacterial virulence genes in the genome of the emerging pathogen Mycobacterium abscessus.</title>
        <authorList>
            <person name="Ripoll F."/>
            <person name="Pasek S."/>
            <person name="Schenowitz C."/>
            <person name="Dossat C."/>
            <person name="Barbe V."/>
            <person name="Rottman M."/>
            <person name="Macheras E."/>
            <person name="Heym B."/>
            <person name="Herrmann J.L."/>
            <person name="Daffe M."/>
            <person name="Brosch R."/>
            <person name="Risler J.L."/>
            <person name="Gaillard J.L."/>
        </authorList>
    </citation>
    <scope>NUCLEOTIDE SEQUENCE [LARGE SCALE GENOMIC DNA]</scope>
    <source>
        <strain>ATCC 19977 / DSM 44196 / CCUG 20993 / CIP 104536 / JCM 13569 / NCTC 13031 / TMC 1543 / L948</strain>
    </source>
</reference>
<feature type="chain" id="PRO_1000118400" description="Peptidyl-tRNA hydrolase">
    <location>
        <begin position="1"/>
        <end position="196"/>
    </location>
</feature>
<feature type="active site" description="Proton acceptor" evidence="1">
    <location>
        <position position="26"/>
    </location>
</feature>
<feature type="binding site" evidence="1">
    <location>
        <position position="21"/>
    </location>
    <ligand>
        <name>tRNA</name>
        <dbReference type="ChEBI" id="CHEBI:17843"/>
    </ligand>
</feature>
<feature type="binding site" evidence="1">
    <location>
        <position position="72"/>
    </location>
    <ligand>
        <name>tRNA</name>
        <dbReference type="ChEBI" id="CHEBI:17843"/>
    </ligand>
</feature>
<feature type="binding site" evidence="1">
    <location>
        <position position="74"/>
    </location>
    <ligand>
        <name>tRNA</name>
        <dbReference type="ChEBI" id="CHEBI:17843"/>
    </ligand>
</feature>
<feature type="binding site" evidence="1">
    <location>
        <position position="120"/>
    </location>
    <ligand>
        <name>tRNA</name>
        <dbReference type="ChEBI" id="CHEBI:17843"/>
    </ligand>
</feature>
<feature type="site" description="Discriminates between blocked and unblocked aminoacyl-tRNA" evidence="1">
    <location>
        <position position="16"/>
    </location>
</feature>
<feature type="site" description="Stabilizes the basic form of H active site to accept a proton" evidence="1">
    <location>
        <position position="99"/>
    </location>
</feature>
<keyword id="KW-0963">Cytoplasm</keyword>
<keyword id="KW-0378">Hydrolase</keyword>
<keyword id="KW-1185">Reference proteome</keyword>
<keyword id="KW-0694">RNA-binding</keyword>
<keyword id="KW-0820">tRNA-binding</keyword>
<proteinExistence type="inferred from homology"/>